<feature type="chain" id="PRO_0000101421" description="Uncharacterized protein RP853">
    <location>
        <begin position="1"/>
        <end position="322"/>
    </location>
</feature>
<feature type="transmembrane region" description="Helical" evidence="1">
    <location>
        <begin position="212"/>
        <end position="234"/>
    </location>
</feature>
<gene>
    <name type="ordered locus">RP853</name>
</gene>
<evidence type="ECO:0000255" key="1"/>
<evidence type="ECO:0000305" key="2"/>
<reference key="1">
    <citation type="journal article" date="1998" name="Nature">
        <title>The genome sequence of Rickettsia prowazekii and the origin of mitochondria.</title>
        <authorList>
            <person name="Andersson S.G.E."/>
            <person name="Zomorodipour A."/>
            <person name="Andersson J.O."/>
            <person name="Sicheritz-Ponten T."/>
            <person name="Alsmark U.C.M."/>
            <person name="Podowski R.M."/>
            <person name="Naeslund A.K."/>
            <person name="Eriksson A.-S."/>
            <person name="Winkler H.H."/>
            <person name="Kurland C.G."/>
        </authorList>
    </citation>
    <scope>NUCLEOTIDE SEQUENCE [LARGE SCALE GENOMIC DNA]</scope>
    <source>
        <strain>Madrid E</strain>
    </source>
</reference>
<organism>
    <name type="scientific">Rickettsia prowazekii (strain Madrid E)</name>
    <dbReference type="NCBI Taxonomy" id="272947"/>
    <lineage>
        <taxon>Bacteria</taxon>
        <taxon>Pseudomonadati</taxon>
        <taxon>Pseudomonadota</taxon>
        <taxon>Alphaproteobacteria</taxon>
        <taxon>Rickettsiales</taxon>
        <taxon>Rickettsiaceae</taxon>
        <taxon>Rickettsieae</taxon>
        <taxon>Rickettsia</taxon>
        <taxon>typhus group</taxon>
    </lineage>
</organism>
<accession>Q9ZCA7</accession>
<comment type="subcellular location">
    <subcellularLocation>
        <location evidence="2">Membrane</location>
        <topology evidence="2">Single-pass membrane protein</topology>
    </subcellularLocation>
</comment>
<name>Y853_RICPR</name>
<sequence>MNNAIVLNNVNTNLFKKDIINNFVNNLTKSTCSTIANMLAIDYTLRLNSKPEAEKYIKKCVTRLKSYLGMRVINDDNFSVALELFAIMITYEYENEQNKDNILEQSQNVIAANLVEVYFSDAKITSSEKEKIKNIFKTLLKEKNFDKIINYAESHKKLFKMSVMYAMQKYNNIDQATIYIKKEFNKILDMSLAFTQKCNIFKQTTGKIVGAVCALLVGAISVATAGAAFSIIIVPTLIFAIRYAPALGEKIGEFILNNDNVIKLEQSNIDEFMKTLQNNKENLLSQEKVKKIKNNITVVPPTINSKLIKKVVNNKKNIDRIY</sequence>
<proteinExistence type="predicted"/>
<protein>
    <recommendedName>
        <fullName>Uncharacterized protein RP853</fullName>
    </recommendedName>
</protein>
<dbReference type="EMBL" id="AJ235273">
    <property type="protein sequence ID" value="CAA15277.1"/>
    <property type="molecule type" value="Genomic_DNA"/>
</dbReference>
<dbReference type="PIR" id="E71647">
    <property type="entry name" value="E71647"/>
</dbReference>
<dbReference type="RefSeq" id="NP_221201.1">
    <property type="nucleotide sequence ID" value="NC_000963.1"/>
</dbReference>
<dbReference type="RefSeq" id="WP_004599682.1">
    <property type="nucleotide sequence ID" value="NC_000963.1"/>
</dbReference>
<dbReference type="SMR" id="Q9ZCA7"/>
<dbReference type="STRING" id="272947.gene:17555922"/>
<dbReference type="EnsemblBacteria" id="CAA15277">
    <property type="protein sequence ID" value="CAA15277"/>
    <property type="gene ID" value="CAA15277"/>
</dbReference>
<dbReference type="KEGG" id="rpr:RP853"/>
<dbReference type="PATRIC" id="fig|272947.5.peg.891"/>
<dbReference type="HOGENOM" id="CLU_902779_0_0_5"/>
<dbReference type="OrthoDB" id="7161136at2"/>
<dbReference type="Proteomes" id="UP000002480">
    <property type="component" value="Chromosome"/>
</dbReference>
<dbReference type="GO" id="GO:0016020">
    <property type="term" value="C:membrane"/>
    <property type="evidence" value="ECO:0007669"/>
    <property type="project" value="UniProtKB-SubCell"/>
</dbReference>
<dbReference type="InterPro" id="IPR020180">
    <property type="entry name" value="Uncharacterised_RP853"/>
</dbReference>
<dbReference type="Pfam" id="PF17542">
    <property type="entry name" value="RP853"/>
    <property type="match status" value="1"/>
</dbReference>
<keyword id="KW-0472">Membrane</keyword>
<keyword id="KW-1185">Reference proteome</keyword>
<keyword id="KW-0812">Transmembrane</keyword>
<keyword id="KW-1133">Transmembrane helix</keyword>